<keyword id="KW-0378">Hydrolase</keyword>
<keyword id="KW-0511">Multifunctional enzyme</keyword>
<keyword id="KW-0658">Purine biosynthesis</keyword>
<keyword id="KW-0808">Transferase</keyword>
<organism>
    <name type="scientific">Paraburkholderia phytofirmans (strain DSM 17436 / LMG 22146 / PsJN)</name>
    <name type="common">Burkholderia phytofirmans</name>
    <dbReference type="NCBI Taxonomy" id="398527"/>
    <lineage>
        <taxon>Bacteria</taxon>
        <taxon>Pseudomonadati</taxon>
        <taxon>Pseudomonadota</taxon>
        <taxon>Betaproteobacteria</taxon>
        <taxon>Burkholderiales</taxon>
        <taxon>Burkholderiaceae</taxon>
        <taxon>Paraburkholderia</taxon>
    </lineage>
</organism>
<comment type="catalytic activity">
    <reaction evidence="1">
        <text>(6R)-10-formyltetrahydrofolate + 5-amino-1-(5-phospho-beta-D-ribosyl)imidazole-4-carboxamide = 5-formamido-1-(5-phospho-D-ribosyl)imidazole-4-carboxamide + (6S)-5,6,7,8-tetrahydrofolate</text>
        <dbReference type="Rhea" id="RHEA:22192"/>
        <dbReference type="ChEBI" id="CHEBI:57453"/>
        <dbReference type="ChEBI" id="CHEBI:58467"/>
        <dbReference type="ChEBI" id="CHEBI:58475"/>
        <dbReference type="ChEBI" id="CHEBI:195366"/>
        <dbReference type="EC" id="2.1.2.3"/>
    </reaction>
</comment>
<comment type="catalytic activity">
    <reaction evidence="1">
        <text>IMP + H2O = 5-formamido-1-(5-phospho-D-ribosyl)imidazole-4-carboxamide</text>
        <dbReference type="Rhea" id="RHEA:18445"/>
        <dbReference type="ChEBI" id="CHEBI:15377"/>
        <dbReference type="ChEBI" id="CHEBI:58053"/>
        <dbReference type="ChEBI" id="CHEBI:58467"/>
        <dbReference type="EC" id="3.5.4.10"/>
    </reaction>
</comment>
<comment type="pathway">
    <text evidence="1">Purine metabolism; IMP biosynthesis via de novo pathway; 5-formamido-1-(5-phospho-D-ribosyl)imidazole-4-carboxamide from 5-amino-1-(5-phospho-D-ribosyl)imidazole-4-carboxamide (10-formyl THF route): step 1/1.</text>
</comment>
<comment type="pathway">
    <text evidence="1">Purine metabolism; IMP biosynthesis via de novo pathway; IMP from 5-formamido-1-(5-phospho-D-ribosyl)imidazole-4-carboxamide: step 1/1.</text>
</comment>
<comment type="domain">
    <text evidence="1">The IMP cyclohydrolase activity resides in the N-terminal region.</text>
</comment>
<comment type="similarity">
    <text evidence="1">Belongs to the PurH family.</text>
</comment>
<evidence type="ECO:0000255" key="1">
    <source>
        <dbReference type="HAMAP-Rule" id="MF_00139"/>
    </source>
</evidence>
<evidence type="ECO:0000255" key="2">
    <source>
        <dbReference type="PROSITE-ProRule" id="PRU01202"/>
    </source>
</evidence>
<gene>
    <name evidence="1" type="primary">purH</name>
    <name type="ordered locus">Bphyt_3341</name>
</gene>
<protein>
    <recommendedName>
        <fullName evidence="1">Bifunctional purine biosynthesis protein PurH</fullName>
    </recommendedName>
    <domain>
        <recommendedName>
            <fullName evidence="1">Phosphoribosylaminoimidazolecarboxamide formyltransferase</fullName>
            <ecNumber evidence="1">2.1.2.3</ecNumber>
        </recommendedName>
        <alternativeName>
            <fullName evidence="1">AICAR transformylase</fullName>
        </alternativeName>
    </domain>
    <domain>
        <recommendedName>
            <fullName evidence="1">IMP cyclohydrolase</fullName>
            <ecNumber evidence="1">3.5.4.10</ecNumber>
        </recommendedName>
        <alternativeName>
            <fullName evidence="1">ATIC</fullName>
        </alternativeName>
        <alternativeName>
            <fullName evidence="1">IMP synthase</fullName>
        </alternativeName>
        <alternativeName>
            <fullName evidence="1">Inosinicase</fullName>
        </alternativeName>
    </domain>
</protein>
<proteinExistence type="inferred from homology"/>
<name>PUR9_PARPJ</name>
<reference key="1">
    <citation type="journal article" date="2011" name="J. Bacteriol.">
        <title>Complete genome sequence of the plant growth-promoting endophyte Burkholderia phytofirmans strain PsJN.</title>
        <authorList>
            <person name="Weilharter A."/>
            <person name="Mitter B."/>
            <person name="Shin M.V."/>
            <person name="Chain P.S."/>
            <person name="Nowak J."/>
            <person name="Sessitsch A."/>
        </authorList>
    </citation>
    <scope>NUCLEOTIDE SEQUENCE [LARGE SCALE GENOMIC DNA]</scope>
    <source>
        <strain>DSM 17436 / LMG 22146 / PsJN</strain>
    </source>
</reference>
<sequence length="521" mass="55906">MIKQALISVSDKSGIVDFAKSLSDLGVKILSTGGTAKLLADAGLSVTEVADYTGFPEMLDGRVKTLHPKVHGGILARRDLPEHMAALEKHDIPTIDLLVVNLYPFVQTVSKEECSLEDAIENIDIGGPTMLRSAAKNHRDVTVVVDPADYAVVLDEMRANSNAVSYKTNFRLATKVFAHTAQYDGAITNYLTSLTDELQHSSRNTYPATFNLAFDKVQDLRYGENPHQSAAFYRDLSVPAGALANYNQLQGKELSYNNIADSDAAWECVKTFDVPACVIVKHANPCGVALGADAHDAYAKALQTDPTSAFGGIIAFNREVDEAAAQAVAKQFVEVLIAPSFSAEARQVFAAKQNVRLLEIALGEGHNAFDLKRVGGGLLVQSLDSKNVQPHELRVVTKRHPTPKEMDDLLFAWRVAKFVKSNAIVFCGNGMTLGVGAGQMSRVDSARIASIKAQNAGLTLAGSAVASDAFFPFRDGLDVVVAAGASCVIQPGGSMRDDEVVGAADEHNIAMVLTGVRHFRH</sequence>
<accession>B2SYJ7</accession>
<dbReference type="EC" id="2.1.2.3" evidence="1"/>
<dbReference type="EC" id="3.5.4.10" evidence="1"/>
<dbReference type="EMBL" id="CP001052">
    <property type="protein sequence ID" value="ACD17732.1"/>
    <property type="molecule type" value="Genomic_DNA"/>
</dbReference>
<dbReference type="RefSeq" id="WP_012434299.1">
    <property type="nucleotide sequence ID" value="NC_010681.1"/>
</dbReference>
<dbReference type="SMR" id="B2SYJ7"/>
<dbReference type="STRING" id="398527.Bphyt_3341"/>
<dbReference type="KEGG" id="bpy:Bphyt_3341"/>
<dbReference type="eggNOG" id="COG0138">
    <property type="taxonomic scope" value="Bacteria"/>
</dbReference>
<dbReference type="HOGENOM" id="CLU_016316_5_2_4"/>
<dbReference type="OrthoDB" id="9802065at2"/>
<dbReference type="UniPathway" id="UPA00074">
    <property type="reaction ID" value="UER00133"/>
</dbReference>
<dbReference type="UniPathway" id="UPA00074">
    <property type="reaction ID" value="UER00135"/>
</dbReference>
<dbReference type="Proteomes" id="UP000001739">
    <property type="component" value="Chromosome 1"/>
</dbReference>
<dbReference type="GO" id="GO:0005829">
    <property type="term" value="C:cytosol"/>
    <property type="evidence" value="ECO:0007669"/>
    <property type="project" value="TreeGrafter"/>
</dbReference>
<dbReference type="GO" id="GO:0003937">
    <property type="term" value="F:IMP cyclohydrolase activity"/>
    <property type="evidence" value="ECO:0007669"/>
    <property type="project" value="UniProtKB-UniRule"/>
</dbReference>
<dbReference type="GO" id="GO:0004643">
    <property type="term" value="F:phosphoribosylaminoimidazolecarboxamide formyltransferase activity"/>
    <property type="evidence" value="ECO:0007669"/>
    <property type="project" value="UniProtKB-UniRule"/>
</dbReference>
<dbReference type="GO" id="GO:0006189">
    <property type="term" value="P:'de novo' IMP biosynthetic process"/>
    <property type="evidence" value="ECO:0007669"/>
    <property type="project" value="UniProtKB-UniRule"/>
</dbReference>
<dbReference type="CDD" id="cd01421">
    <property type="entry name" value="IMPCH"/>
    <property type="match status" value="1"/>
</dbReference>
<dbReference type="FunFam" id="3.40.140.20:FF:000001">
    <property type="entry name" value="Bifunctional purine biosynthesis protein PurH"/>
    <property type="match status" value="1"/>
</dbReference>
<dbReference type="FunFam" id="3.40.140.20:FF:000002">
    <property type="entry name" value="Bifunctional purine biosynthesis protein PurH"/>
    <property type="match status" value="1"/>
</dbReference>
<dbReference type="FunFam" id="3.40.50.1380:FF:000001">
    <property type="entry name" value="Bifunctional purine biosynthesis protein PurH"/>
    <property type="match status" value="1"/>
</dbReference>
<dbReference type="Gene3D" id="3.40.140.20">
    <property type="match status" value="2"/>
</dbReference>
<dbReference type="Gene3D" id="3.40.50.1380">
    <property type="entry name" value="Methylglyoxal synthase-like domain"/>
    <property type="match status" value="1"/>
</dbReference>
<dbReference type="HAMAP" id="MF_00139">
    <property type="entry name" value="PurH"/>
    <property type="match status" value="1"/>
</dbReference>
<dbReference type="InterPro" id="IPR024051">
    <property type="entry name" value="AICAR_Tfase_dup_dom_sf"/>
</dbReference>
<dbReference type="InterPro" id="IPR016193">
    <property type="entry name" value="Cytidine_deaminase-like"/>
</dbReference>
<dbReference type="InterPro" id="IPR011607">
    <property type="entry name" value="MGS-like_dom"/>
</dbReference>
<dbReference type="InterPro" id="IPR036914">
    <property type="entry name" value="MGS-like_dom_sf"/>
</dbReference>
<dbReference type="InterPro" id="IPR002695">
    <property type="entry name" value="PurH-like"/>
</dbReference>
<dbReference type="NCBIfam" id="NF002049">
    <property type="entry name" value="PRK00881.1"/>
    <property type="match status" value="1"/>
</dbReference>
<dbReference type="NCBIfam" id="TIGR00355">
    <property type="entry name" value="purH"/>
    <property type="match status" value="1"/>
</dbReference>
<dbReference type="PANTHER" id="PTHR11692:SF0">
    <property type="entry name" value="BIFUNCTIONAL PURINE BIOSYNTHESIS PROTEIN ATIC"/>
    <property type="match status" value="1"/>
</dbReference>
<dbReference type="PANTHER" id="PTHR11692">
    <property type="entry name" value="BIFUNCTIONAL PURINE BIOSYNTHESIS PROTEIN PURH"/>
    <property type="match status" value="1"/>
</dbReference>
<dbReference type="Pfam" id="PF01808">
    <property type="entry name" value="AICARFT_IMPCHas"/>
    <property type="match status" value="1"/>
</dbReference>
<dbReference type="Pfam" id="PF02142">
    <property type="entry name" value="MGS"/>
    <property type="match status" value="1"/>
</dbReference>
<dbReference type="PIRSF" id="PIRSF000414">
    <property type="entry name" value="AICARFT_IMPCHas"/>
    <property type="match status" value="1"/>
</dbReference>
<dbReference type="SMART" id="SM00798">
    <property type="entry name" value="AICARFT_IMPCHas"/>
    <property type="match status" value="1"/>
</dbReference>
<dbReference type="SMART" id="SM00851">
    <property type="entry name" value="MGS"/>
    <property type="match status" value="1"/>
</dbReference>
<dbReference type="SUPFAM" id="SSF53927">
    <property type="entry name" value="Cytidine deaminase-like"/>
    <property type="match status" value="1"/>
</dbReference>
<dbReference type="SUPFAM" id="SSF52335">
    <property type="entry name" value="Methylglyoxal synthase-like"/>
    <property type="match status" value="1"/>
</dbReference>
<dbReference type="PROSITE" id="PS51855">
    <property type="entry name" value="MGS"/>
    <property type="match status" value="1"/>
</dbReference>
<feature type="chain" id="PRO_1000096048" description="Bifunctional purine biosynthesis protein PurH">
    <location>
        <begin position="1"/>
        <end position="521"/>
    </location>
</feature>
<feature type="domain" description="MGS-like" evidence="2">
    <location>
        <begin position="1"/>
        <end position="145"/>
    </location>
</feature>